<keyword id="KW-0009">Actin-binding</keyword>
<keyword id="KW-0020">Allergen</keyword>
<keyword id="KW-0963">Cytoplasm</keyword>
<keyword id="KW-0206">Cytoskeleton</keyword>
<keyword id="KW-1015">Disulfide bond</keyword>
<keyword id="KW-0597">Phosphoprotein</keyword>
<feature type="initiator methionine" description="Removed" evidence="1">
    <location>
        <position position="1"/>
    </location>
</feature>
<feature type="chain" id="PRO_0000425001" description="Profilin-4">
    <location>
        <begin position="2"/>
        <end position="134"/>
    </location>
</feature>
<feature type="short sequence motif" description="Involved in PIP2 interaction">
    <location>
        <begin position="84"/>
        <end position="100"/>
    </location>
</feature>
<feature type="modified residue" description="Phosphothreonine" evidence="1">
    <location>
        <position position="114"/>
    </location>
</feature>
<feature type="disulfide bond" evidence="3">
    <location>
        <begin position="13"/>
        <end position="118"/>
    </location>
</feature>
<comment type="function">
    <text evidence="1">Binds to actin and affects the structure of the cytoskeleton. At high concentrations, profilin prevents the polymerization of actin, whereas it enhances it at low concentrations (By similarity).</text>
</comment>
<comment type="subunit">
    <text evidence="1">Occurs in many kinds of cells as a complex with monomeric actin in a 1:1 ratio.</text>
</comment>
<comment type="subcellular location">
    <subcellularLocation>
        <location evidence="1">Cytoplasm</location>
        <location evidence="1">Cytoskeleton</location>
    </subcellularLocation>
</comment>
<comment type="PTM">
    <text evidence="1">Phosphorylated by MAP kinases.</text>
</comment>
<comment type="polymorphism">
    <text>Several isoforms of the allergen exist due to polymorphism.</text>
</comment>
<comment type="allergen">
    <text>Causes an allergic reaction in human.</text>
</comment>
<comment type="miscellaneous">
    <text evidence="3">The variability of the residues taking part of IgE-binding epitopes might be responsible of the difference in cross-reactivity among olive pollen cultivars, and between distantly related pollen species, leading to a variable range of allergy reactions among atopic patients.</text>
</comment>
<comment type="similarity">
    <text evidence="2">Belongs to the profilin family.</text>
</comment>
<reference key="1">
    <citation type="journal article" date="2012" name="PLoS ONE">
        <title>Characterization of profilin polymorphism in pollen with a focus on multifunctionality.</title>
        <authorList>
            <person name="Jimenez-Lopez J.C."/>
            <person name="Morales S."/>
            <person name="Castro A.J."/>
            <person name="Volkmann D."/>
            <person name="Rodriguez-Garcia M.I."/>
            <person name="Alche Jde D."/>
        </authorList>
    </citation>
    <scope>NUCLEOTIDE SEQUENCE [MRNA]</scope>
    <scope>POLYMORPHISM</scope>
    <source>
        <strain>cv. Picudo</strain>
    </source>
</reference>
<reference key="2">
    <citation type="journal article" date="2013" name="PLoS ONE">
        <title>Analysis of the effects of polymorphism on pollen profilin structural functionality and the generation of conformational, T- and B-cell epitopes.</title>
        <authorList>
            <person name="Jimenez-Lopez J.C."/>
            <person name="Rodriguez-Garcia M.I."/>
            <person name="Alche J.D."/>
        </authorList>
    </citation>
    <scope>3D-STRUCTURE MODELING</scope>
    <scope>DISULFIDE BOND</scope>
</reference>
<organism>
    <name type="scientific">Olea europaea</name>
    <name type="common">Common olive</name>
    <dbReference type="NCBI Taxonomy" id="4146"/>
    <lineage>
        <taxon>Eukaryota</taxon>
        <taxon>Viridiplantae</taxon>
        <taxon>Streptophyta</taxon>
        <taxon>Embryophyta</taxon>
        <taxon>Tracheophyta</taxon>
        <taxon>Spermatophyta</taxon>
        <taxon>Magnoliopsida</taxon>
        <taxon>eudicotyledons</taxon>
        <taxon>Gunneridae</taxon>
        <taxon>Pentapetalae</taxon>
        <taxon>asterids</taxon>
        <taxon>lamiids</taxon>
        <taxon>Lamiales</taxon>
        <taxon>Oleaceae</taxon>
        <taxon>Oleeae</taxon>
        <taxon>Olea</taxon>
    </lineage>
</organism>
<accession>A4GD58</accession>
<evidence type="ECO:0000250" key="1"/>
<evidence type="ECO:0000305" key="2"/>
<evidence type="ECO:0000305" key="3">
    <source>
    </source>
</evidence>
<protein>
    <recommendedName>
        <fullName>Profilin-4</fullName>
    </recommendedName>
    <alternativeName>
        <fullName>Pollen allergen Ole e 2</fullName>
    </alternativeName>
    <allergenName>Ole e 2</allergenName>
</protein>
<dbReference type="EMBL" id="DQ117910">
    <property type="protein sequence ID" value="AAZ30400.1"/>
    <property type="molecule type" value="mRNA"/>
</dbReference>
<dbReference type="SMR" id="A4GD58"/>
<dbReference type="Allergome" id="490">
    <property type="allergen name" value="Ole e 2"/>
</dbReference>
<dbReference type="GO" id="GO:0005938">
    <property type="term" value="C:cell cortex"/>
    <property type="evidence" value="ECO:0007669"/>
    <property type="project" value="TreeGrafter"/>
</dbReference>
<dbReference type="GO" id="GO:0005856">
    <property type="term" value="C:cytoskeleton"/>
    <property type="evidence" value="ECO:0007669"/>
    <property type="project" value="UniProtKB-SubCell"/>
</dbReference>
<dbReference type="GO" id="GO:0003785">
    <property type="term" value="F:actin monomer binding"/>
    <property type="evidence" value="ECO:0007669"/>
    <property type="project" value="TreeGrafter"/>
</dbReference>
<dbReference type="CDD" id="cd00148">
    <property type="entry name" value="PROF"/>
    <property type="match status" value="1"/>
</dbReference>
<dbReference type="FunFam" id="3.30.450.30:FF:000001">
    <property type="entry name" value="Profilin"/>
    <property type="match status" value="1"/>
</dbReference>
<dbReference type="Gene3D" id="3.30.450.30">
    <property type="entry name" value="Dynein light chain 2a, cytoplasmic"/>
    <property type="match status" value="1"/>
</dbReference>
<dbReference type="InterPro" id="IPR048278">
    <property type="entry name" value="PFN"/>
</dbReference>
<dbReference type="InterPro" id="IPR005455">
    <property type="entry name" value="PFN_euk"/>
</dbReference>
<dbReference type="InterPro" id="IPR036140">
    <property type="entry name" value="PFN_sf"/>
</dbReference>
<dbReference type="InterPro" id="IPR027310">
    <property type="entry name" value="Profilin_CS"/>
</dbReference>
<dbReference type="PANTHER" id="PTHR11604">
    <property type="entry name" value="PROFILIN"/>
    <property type="match status" value="1"/>
</dbReference>
<dbReference type="PANTHER" id="PTHR11604:SF25">
    <property type="entry name" value="PROFILIN-5"/>
    <property type="match status" value="1"/>
</dbReference>
<dbReference type="Pfam" id="PF00235">
    <property type="entry name" value="Profilin"/>
    <property type="match status" value="1"/>
</dbReference>
<dbReference type="PRINTS" id="PR00392">
    <property type="entry name" value="PROFILIN"/>
</dbReference>
<dbReference type="PRINTS" id="PR01640">
    <property type="entry name" value="PROFILINPLNT"/>
</dbReference>
<dbReference type="SMART" id="SM00392">
    <property type="entry name" value="PROF"/>
    <property type="match status" value="1"/>
</dbReference>
<dbReference type="SUPFAM" id="SSF55770">
    <property type="entry name" value="Profilin (actin-binding protein)"/>
    <property type="match status" value="1"/>
</dbReference>
<dbReference type="PROSITE" id="PS00414">
    <property type="entry name" value="PROFILIN"/>
    <property type="match status" value="1"/>
</dbReference>
<sequence length="134" mass="14418">MSWQAYVDDHLMCDIEGHEGHRLTAAAIVGQDGSVWAQSATFPQFKPEEMNGIMTDFNEPGHLAPTGLHLGGTKYMVIQGEAGAVIRGKKGSGGITIKKTGQALVFGIYEEPVTPGKCNMVVERLGDYLLEQGL</sequence>
<proteinExistence type="evidence at protein level"/>
<name>PROAJ_OLEEU</name>